<proteinExistence type="inferred from homology"/>
<gene>
    <name evidence="1" type="primary">ung</name>
    <name type="ordered locus">BP3056</name>
</gene>
<name>UNG_BORPE</name>
<evidence type="ECO:0000255" key="1">
    <source>
        <dbReference type="HAMAP-Rule" id="MF_00148"/>
    </source>
</evidence>
<evidence type="ECO:0000256" key="2">
    <source>
        <dbReference type="SAM" id="MobiDB-lite"/>
    </source>
</evidence>
<dbReference type="EC" id="3.2.2.27" evidence="1"/>
<dbReference type="EMBL" id="BX640420">
    <property type="protein sequence ID" value="CAE43325.1"/>
    <property type="molecule type" value="Genomic_DNA"/>
</dbReference>
<dbReference type="RefSeq" id="NP_881627.1">
    <property type="nucleotide sequence ID" value="NC_002929.2"/>
</dbReference>
<dbReference type="RefSeq" id="WP_003818450.1">
    <property type="nucleotide sequence ID" value="NZ_CP039022.1"/>
</dbReference>
<dbReference type="SMR" id="Q7VUM8"/>
<dbReference type="STRING" id="257313.BP3056"/>
<dbReference type="PaxDb" id="257313-BP3056"/>
<dbReference type="KEGG" id="bpe:BP3056"/>
<dbReference type="PATRIC" id="fig|257313.5.peg.3304"/>
<dbReference type="eggNOG" id="COG0692">
    <property type="taxonomic scope" value="Bacteria"/>
</dbReference>
<dbReference type="HOGENOM" id="CLU_032162_3_0_4"/>
<dbReference type="Proteomes" id="UP000002676">
    <property type="component" value="Chromosome"/>
</dbReference>
<dbReference type="GO" id="GO:0005737">
    <property type="term" value="C:cytoplasm"/>
    <property type="evidence" value="ECO:0007669"/>
    <property type="project" value="UniProtKB-SubCell"/>
</dbReference>
<dbReference type="GO" id="GO:0004844">
    <property type="term" value="F:uracil DNA N-glycosylase activity"/>
    <property type="evidence" value="ECO:0007669"/>
    <property type="project" value="UniProtKB-UniRule"/>
</dbReference>
<dbReference type="GO" id="GO:0097510">
    <property type="term" value="P:base-excision repair, AP site formation via deaminated base removal"/>
    <property type="evidence" value="ECO:0007669"/>
    <property type="project" value="TreeGrafter"/>
</dbReference>
<dbReference type="CDD" id="cd10027">
    <property type="entry name" value="UDG-F1-like"/>
    <property type="match status" value="1"/>
</dbReference>
<dbReference type="Gene3D" id="3.40.470.10">
    <property type="entry name" value="Uracil-DNA glycosylase-like domain"/>
    <property type="match status" value="1"/>
</dbReference>
<dbReference type="HAMAP" id="MF_00148">
    <property type="entry name" value="UDG"/>
    <property type="match status" value="1"/>
</dbReference>
<dbReference type="InterPro" id="IPR002043">
    <property type="entry name" value="UDG_fam1"/>
</dbReference>
<dbReference type="InterPro" id="IPR018085">
    <property type="entry name" value="Ura-DNA_Glyclase_AS"/>
</dbReference>
<dbReference type="InterPro" id="IPR005122">
    <property type="entry name" value="Uracil-DNA_glycosylase-like"/>
</dbReference>
<dbReference type="InterPro" id="IPR036895">
    <property type="entry name" value="Uracil-DNA_glycosylase-like_sf"/>
</dbReference>
<dbReference type="NCBIfam" id="NF003588">
    <property type="entry name" value="PRK05254.1-1"/>
    <property type="match status" value="1"/>
</dbReference>
<dbReference type="NCBIfam" id="NF003589">
    <property type="entry name" value="PRK05254.1-2"/>
    <property type="match status" value="1"/>
</dbReference>
<dbReference type="NCBIfam" id="NF003591">
    <property type="entry name" value="PRK05254.1-4"/>
    <property type="match status" value="1"/>
</dbReference>
<dbReference type="NCBIfam" id="NF003592">
    <property type="entry name" value="PRK05254.1-5"/>
    <property type="match status" value="1"/>
</dbReference>
<dbReference type="NCBIfam" id="TIGR00628">
    <property type="entry name" value="ung"/>
    <property type="match status" value="1"/>
</dbReference>
<dbReference type="PANTHER" id="PTHR11264">
    <property type="entry name" value="URACIL-DNA GLYCOSYLASE"/>
    <property type="match status" value="1"/>
</dbReference>
<dbReference type="PANTHER" id="PTHR11264:SF0">
    <property type="entry name" value="URACIL-DNA GLYCOSYLASE"/>
    <property type="match status" value="1"/>
</dbReference>
<dbReference type="Pfam" id="PF03167">
    <property type="entry name" value="UDG"/>
    <property type="match status" value="1"/>
</dbReference>
<dbReference type="SMART" id="SM00986">
    <property type="entry name" value="UDG"/>
    <property type="match status" value="1"/>
</dbReference>
<dbReference type="SMART" id="SM00987">
    <property type="entry name" value="UreE_C"/>
    <property type="match status" value="1"/>
</dbReference>
<dbReference type="SUPFAM" id="SSF52141">
    <property type="entry name" value="Uracil-DNA glycosylase-like"/>
    <property type="match status" value="1"/>
</dbReference>
<dbReference type="PROSITE" id="PS00130">
    <property type="entry name" value="U_DNA_GLYCOSYLASE"/>
    <property type="match status" value="1"/>
</dbReference>
<accession>Q7VUM8</accession>
<organism>
    <name type="scientific">Bordetella pertussis (strain Tohama I / ATCC BAA-589 / NCTC 13251)</name>
    <dbReference type="NCBI Taxonomy" id="257313"/>
    <lineage>
        <taxon>Bacteria</taxon>
        <taxon>Pseudomonadati</taxon>
        <taxon>Pseudomonadota</taxon>
        <taxon>Betaproteobacteria</taxon>
        <taxon>Burkholderiales</taxon>
        <taxon>Alcaligenaceae</taxon>
        <taxon>Bordetella</taxon>
    </lineage>
</organism>
<sequence length="250" mass="26880">MPNDNRLAPAALAAQAAALPAAWRHVLEQPAVARAFASVLGHVEQRLAEGAVVYPAAPFRALDQLAPADVRVVILGQDPYHGPGQAQGLAFSVPDDCKCPPSLRNIFNEIAVDYPRPTRHDLSAWTRQGVLLLNTSLTVEDGQPGSHAKRGWETVTDALIAEVARDPSPKVFLLWGAHAQAKQALVPADAGHLVLAANHPSPLSARRPPVPFVGCGHFRQTNAWLQQRGQKPVDWSGEQNNASRQGEFAL</sequence>
<reference key="1">
    <citation type="journal article" date="2003" name="Nat. Genet.">
        <title>Comparative analysis of the genome sequences of Bordetella pertussis, Bordetella parapertussis and Bordetella bronchiseptica.</title>
        <authorList>
            <person name="Parkhill J."/>
            <person name="Sebaihia M."/>
            <person name="Preston A."/>
            <person name="Murphy L.D."/>
            <person name="Thomson N.R."/>
            <person name="Harris D.E."/>
            <person name="Holden M.T.G."/>
            <person name="Churcher C.M."/>
            <person name="Bentley S.D."/>
            <person name="Mungall K.L."/>
            <person name="Cerdeno-Tarraga A.-M."/>
            <person name="Temple L."/>
            <person name="James K.D."/>
            <person name="Harris B."/>
            <person name="Quail M.A."/>
            <person name="Achtman M."/>
            <person name="Atkin R."/>
            <person name="Baker S."/>
            <person name="Basham D."/>
            <person name="Bason N."/>
            <person name="Cherevach I."/>
            <person name="Chillingworth T."/>
            <person name="Collins M."/>
            <person name="Cronin A."/>
            <person name="Davis P."/>
            <person name="Doggett J."/>
            <person name="Feltwell T."/>
            <person name="Goble A."/>
            <person name="Hamlin N."/>
            <person name="Hauser H."/>
            <person name="Holroyd S."/>
            <person name="Jagels K."/>
            <person name="Leather S."/>
            <person name="Moule S."/>
            <person name="Norberczak H."/>
            <person name="O'Neil S."/>
            <person name="Ormond D."/>
            <person name="Price C."/>
            <person name="Rabbinowitsch E."/>
            <person name="Rutter S."/>
            <person name="Sanders M."/>
            <person name="Saunders D."/>
            <person name="Seeger K."/>
            <person name="Sharp S."/>
            <person name="Simmonds M."/>
            <person name="Skelton J."/>
            <person name="Squares R."/>
            <person name="Squares S."/>
            <person name="Stevens K."/>
            <person name="Unwin L."/>
            <person name="Whitehead S."/>
            <person name="Barrell B.G."/>
            <person name="Maskell D.J."/>
        </authorList>
    </citation>
    <scope>NUCLEOTIDE SEQUENCE [LARGE SCALE GENOMIC DNA]</scope>
    <source>
        <strain>Tohama I / ATCC BAA-589 / NCTC 13251</strain>
    </source>
</reference>
<keyword id="KW-0963">Cytoplasm</keyword>
<keyword id="KW-0227">DNA damage</keyword>
<keyword id="KW-0234">DNA repair</keyword>
<keyword id="KW-0378">Hydrolase</keyword>
<keyword id="KW-1185">Reference proteome</keyword>
<feature type="chain" id="PRO_0000176074" description="Uracil-DNA glycosylase">
    <location>
        <begin position="1"/>
        <end position="250"/>
    </location>
</feature>
<feature type="region of interest" description="Disordered" evidence="2">
    <location>
        <begin position="228"/>
        <end position="250"/>
    </location>
</feature>
<feature type="active site" description="Proton acceptor" evidence="1">
    <location>
        <position position="78"/>
    </location>
</feature>
<protein>
    <recommendedName>
        <fullName evidence="1">Uracil-DNA glycosylase</fullName>
        <shortName evidence="1">UDG</shortName>
        <ecNumber evidence="1">3.2.2.27</ecNumber>
    </recommendedName>
</protein>
<comment type="function">
    <text evidence="1">Excises uracil residues from the DNA which can arise as a result of misincorporation of dUMP residues by DNA polymerase or due to deamination of cytosine.</text>
</comment>
<comment type="catalytic activity">
    <reaction evidence="1">
        <text>Hydrolyzes single-stranded DNA or mismatched double-stranded DNA and polynucleotides, releasing free uracil.</text>
        <dbReference type="EC" id="3.2.2.27"/>
    </reaction>
</comment>
<comment type="subcellular location">
    <subcellularLocation>
        <location evidence="1">Cytoplasm</location>
    </subcellularLocation>
</comment>
<comment type="similarity">
    <text evidence="1">Belongs to the uracil-DNA glycosylase (UDG) superfamily. UNG family.</text>
</comment>